<evidence type="ECO:0000250" key="1">
    <source>
        <dbReference type="UniProtKB" id="A0A075TRB3"/>
    </source>
</evidence>
<evidence type="ECO:0000250" key="2">
    <source>
        <dbReference type="UniProtKB" id="L0E2Z4"/>
    </source>
</evidence>
<evidence type="ECO:0000250" key="3">
    <source>
        <dbReference type="UniProtKB" id="O93868"/>
    </source>
</evidence>
<evidence type="ECO:0000255" key="4">
    <source>
        <dbReference type="PROSITE-ProRule" id="PRU10001"/>
    </source>
</evidence>
<evidence type="ECO:0000269" key="5">
    <source>
    </source>
</evidence>
<evidence type="ECO:0000269" key="6">
    <source>
    </source>
</evidence>
<evidence type="ECO:0000269" key="7">
    <source>
    </source>
</evidence>
<evidence type="ECO:0000303" key="8">
    <source>
    </source>
</evidence>
<evidence type="ECO:0000305" key="9"/>
<evidence type="ECO:0000305" key="10">
    <source>
    </source>
</evidence>
<keyword id="KW-0963">Cytoplasm</keyword>
<keyword id="KW-0521">NADP</keyword>
<keyword id="KW-0560">Oxidoreductase</keyword>
<keyword id="KW-1185">Reference proteome</keyword>
<dbReference type="EC" id="1.1.1.-" evidence="1"/>
<dbReference type="EMBL" id="DS027052">
    <property type="protein sequence ID" value="EAW11670.1"/>
    <property type="molecule type" value="Genomic_DNA"/>
</dbReference>
<dbReference type="RefSeq" id="XP_001273096.1">
    <property type="nucleotide sequence ID" value="XM_001273095.1"/>
</dbReference>
<dbReference type="SMR" id="A1CFM1"/>
<dbReference type="STRING" id="344612.A1CFM1"/>
<dbReference type="EnsemblFungi" id="EAW11670">
    <property type="protein sequence ID" value="EAW11670"/>
    <property type="gene ID" value="ACLA_093690"/>
</dbReference>
<dbReference type="GeneID" id="4704858"/>
<dbReference type="KEGG" id="act:ACLA_093690"/>
<dbReference type="VEuPathDB" id="FungiDB:ACLA_093690"/>
<dbReference type="eggNOG" id="KOG0725">
    <property type="taxonomic scope" value="Eukaryota"/>
</dbReference>
<dbReference type="HOGENOM" id="CLU_010194_1_2_1"/>
<dbReference type="OMA" id="AKDFGRW"/>
<dbReference type="OrthoDB" id="47007at2759"/>
<dbReference type="UniPathway" id="UPA00918"/>
<dbReference type="Proteomes" id="UP000006701">
    <property type="component" value="Unassembled WGS sequence"/>
</dbReference>
<dbReference type="GO" id="GO:0005829">
    <property type="term" value="C:cytosol"/>
    <property type="evidence" value="ECO:0000250"/>
    <property type="project" value="GO_Central"/>
</dbReference>
<dbReference type="GO" id="GO:0016491">
    <property type="term" value="F:oxidoreductase activity"/>
    <property type="evidence" value="ECO:0000250"/>
    <property type="project" value="GO_Central"/>
</dbReference>
<dbReference type="GO" id="GO:0016616">
    <property type="term" value="F:oxidoreductase activity, acting on the CH-OH group of donors, NAD or NADP as acceptor"/>
    <property type="evidence" value="ECO:0007669"/>
    <property type="project" value="TreeGrafter"/>
</dbReference>
<dbReference type="GO" id="GO:0140723">
    <property type="term" value="P:patulin biosynthetic process"/>
    <property type="evidence" value="ECO:0000250"/>
    <property type="project" value="GO_Central"/>
</dbReference>
<dbReference type="CDD" id="cd05233">
    <property type="entry name" value="SDR_c"/>
    <property type="match status" value="1"/>
</dbReference>
<dbReference type="Gene3D" id="3.40.50.720">
    <property type="entry name" value="NAD(P)-binding Rossmann-like Domain"/>
    <property type="match status" value="1"/>
</dbReference>
<dbReference type="InterPro" id="IPR036291">
    <property type="entry name" value="NAD(P)-bd_dom_sf"/>
</dbReference>
<dbReference type="InterPro" id="IPR002347">
    <property type="entry name" value="SDR_fam"/>
</dbReference>
<dbReference type="PANTHER" id="PTHR42760">
    <property type="entry name" value="SHORT-CHAIN DEHYDROGENASES/REDUCTASES FAMILY MEMBER"/>
    <property type="match status" value="1"/>
</dbReference>
<dbReference type="Pfam" id="PF13561">
    <property type="entry name" value="adh_short_C2"/>
    <property type="match status" value="1"/>
</dbReference>
<dbReference type="PRINTS" id="PR00081">
    <property type="entry name" value="GDHRDH"/>
</dbReference>
<dbReference type="SUPFAM" id="SSF51735">
    <property type="entry name" value="NAD(P)-binding Rossmann-fold domains"/>
    <property type="match status" value="1"/>
</dbReference>
<proteinExistence type="evidence at protein level"/>
<sequence length="259" mass="28138">MVLATSLKGAHVLITGGTRGMGEAMVHQFLQEEANVSYCARTVTNTEFDEFYKTLPEGNTARAVGTAFNVASKEAIVDWVKSSAERLGRIDVIIANASPMHMEGETEHWVESFAIDVMGFVELVRAATPYLEQSPQASIIVQSSFMGREFYRSPPAAYGPCKAAQLQHVQELSHYLGPKGIRVNAISPGPILCKGGPWEKYSTLMPEWVEEQRLKIPLKRLGGPTEVANVAVFLASPLASFVTGTNVLVDGGIHVGTQF</sequence>
<comment type="function">
    <text evidence="1 10">Isoepoxydon dehydrogenase; part of the gene cluster that mediates the biosynthesis of patulin, an acetate-derived tetraketide mycotoxin produced by several fungal species that shows antimicrobial properties against several bacteria (By similarity). PatN catalyzes the conversion of isoepoxydon into phyllostine (By similarity). The pathway begins with the synthesis of 6-methylsalicylic acid by the polyketide synthase (PKS) patK via condensation of acetate and malonate units. The 6-methylsalicylic acid decarboxylase patG then catalyzes the decarboxylation of 6-methylsalicylic acid to yield m-cresol (also known as 3-methylphenol). These first reactions occur in the cytosol. The intermediate m-cresol is then transported into the endoplasmic reticulum where the cytochrome P450 monooxygenase patH converts it to m-hydroxybenzyl alcohol, which is further converted to gentisyl alcohol by the cytochrome P450 monooxygenase patI. The oxidoreductases patJ and patO further convert gentisyl alcohol to isoepoxydon in the vacuole. PatN catalyzes then the transformation of isoepoxydon into phyllostine. The cluster protein patF is responsible for the conversion from phyllostine to neopatulin whereas the alcohol dehydrogenase patD converts neopatulin to E-ascladiol. The steps between isoepoxydon and E-ascladiol occur in the cytosol, and E-ascladiol is probably secreted to the extracellular space by one of the cluster-specific transporters patC or patM. Finally, the secreted patulin synthase patE catalyzes the conversion of E-ascladiol to patulin (Probable) (PubMed:19383676).</text>
</comment>
<comment type="catalytic activity">
    <reaction evidence="1">
        <text>isoepoxydon + NADP(+) = phyllostine + NADPH + H(+)</text>
        <dbReference type="Rhea" id="RHEA:62216"/>
        <dbReference type="ChEBI" id="CHEBI:15378"/>
        <dbReference type="ChEBI" id="CHEBI:57783"/>
        <dbReference type="ChEBI" id="CHEBI:58349"/>
        <dbReference type="ChEBI" id="CHEBI:145109"/>
        <dbReference type="ChEBI" id="CHEBI:145110"/>
    </reaction>
    <physiologicalReaction direction="left-to-right" evidence="1">
        <dbReference type="Rhea" id="RHEA:62217"/>
    </physiologicalReaction>
</comment>
<comment type="pathway">
    <text evidence="10">Mycotoxin biosynthesis; patulin biosynthesis.</text>
</comment>
<comment type="subcellular location">
    <subcellularLocation>
        <location evidence="1">Cytoplasm</location>
        <location evidence="1">Cytosol</location>
    </subcellularLocation>
</comment>
<comment type="biotechnology">
    <text evidence="5 6 7">Patulin was originally used as an antibiotic and specifically trialed to be used against the common cold, but it is no longer used for that purpose since it has been shown to induce immunological, neurological and gastrointestinal effects (PubMed:15082620). Genotoxic effects of patulin with dose-dependent increase in DNA strand breaks in brain, liver and kidneys have been detected in mice (PubMed:22222931). However, more recently, it has been proposed that patulin might also have anti-tumor properties (PubMed:26619846).</text>
</comment>
<comment type="similarity">
    <text evidence="9">Belongs to the short-chain dehydrogenases/reductases (SDR) family.</text>
</comment>
<protein>
    <recommendedName>
        <fullName evidence="8">Isoepoxydon dehydrogenase patN</fullName>
        <shortName evidence="8">IDH</shortName>
        <ecNumber evidence="1">1.1.1.-</ecNumber>
    </recommendedName>
    <alternativeName>
        <fullName evidence="8">Patulin synthesis protein N</fullName>
    </alternativeName>
</protein>
<gene>
    <name evidence="8" type="primary">patN</name>
    <name type="ORF">ACLA_093690</name>
</gene>
<accession>A1CFM1</accession>
<reference key="1">
    <citation type="journal article" date="2008" name="PLoS Genet.">
        <title>Genomic islands in the pathogenic filamentous fungus Aspergillus fumigatus.</title>
        <authorList>
            <person name="Fedorova N.D."/>
            <person name="Khaldi N."/>
            <person name="Joardar V.S."/>
            <person name="Maiti R."/>
            <person name="Amedeo P."/>
            <person name="Anderson M.J."/>
            <person name="Crabtree J."/>
            <person name="Silva J.C."/>
            <person name="Badger J.H."/>
            <person name="Albarraq A."/>
            <person name="Angiuoli S."/>
            <person name="Bussey H."/>
            <person name="Bowyer P."/>
            <person name="Cotty P.J."/>
            <person name="Dyer P.S."/>
            <person name="Egan A."/>
            <person name="Galens K."/>
            <person name="Fraser-Liggett C.M."/>
            <person name="Haas B.J."/>
            <person name="Inman J.M."/>
            <person name="Kent R."/>
            <person name="Lemieux S."/>
            <person name="Malavazi I."/>
            <person name="Orvis J."/>
            <person name="Roemer T."/>
            <person name="Ronning C.M."/>
            <person name="Sundaram J.P."/>
            <person name="Sutton G."/>
            <person name="Turner G."/>
            <person name="Venter J.C."/>
            <person name="White O.R."/>
            <person name="Whitty B.R."/>
            <person name="Youngman P."/>
            <person name="Wolfe K.H."/>
            <person name="Goldman G.H."/>
            <person name="Wortman J.R."/>
            <person name="Jiang B."/>
            <person name="Denning D.W."/>
            <person name="Nierman W.C."/>
        </authorList>
    </citation>
    <scope>NUCLEOTIDE SEQUENCE [LARGE SCALE GENOMIC DNA]</scope>
    <source>
        <strain>ATCC 1007 / CBS 513.65 / DSM 816 / NCTC 3887 / NRRL 1 / QM 1276 / 107</strain>
    </source>
</reference>
<reference key="2">
    <citation type="journal article" date="2004" name="Int. J. Epidemiol.">
        <title>Clinical trial of patulin in the common cold. 1944.</title>
        <authorList>
            <consortium name="Patulin Clinical Trials Committee, Medical Research Council"/>
        </authorList>
    </citation>
    <scope>BIOTECHNOLOGY</scope>
</reference>
<reference key="3">
    <citation type="journal article" date="2009" name="Microbiology">
        <title>Molecular cloning and functional characterization of two CYP619 cytochrome P450s involved in biosynthesis of patulin in Aspergillus clavatus.</title>
        <authorList>
            <person name="Artigot M.P."/>
            <person name="Loiseau N."/>
            <person name="Laffitte J."/>
            <person name="Mas-Reguieg L."/>
            <person name="Tadrist S."/>
            <person name="Oswald I.P."/>
            <person name="Puel O."/>
        </authorList>
    </citation>
    <scope>FUNCTION</scope>
</reference>
<reference key="4">
    <citation type="journal article" date="2012" name="Food Chem. Toxicol.">
        <title>DNA damage in organs of mice treated acutely with patulin, a known mycotoxin.</title>
        <authorList>
            <person name="de Melo F.T."/>
            <person name="de Oliveira I.M."/>
            <person name="Greggio S."/>
            <person name="Dacosta J.C."/>
            <person name="Guecheva T.N."/>
            <person name="Saffi J."/>
            <person name="Henriques J.A."/>
            <person name="Rosa R.M."/>
        </authorList>
    </citation>
    <scope>BIOTECHNOLOGY</scope>
</reference>
<reference key="5">
    <citation type="journal article" date="2016" name="Tumor Biol.">
        <title>The potential effect of patulin on mice bearing melanoma cells: an anti-tumour or carcinogenic effect?</title>
        <authorList>
            <person name="Boussabbeh M."/>
            <person name="Ben Salem I."/>
            <person name="Rjiba-Touati K."/>
            <person name="Bouyahya C."/>
            <person name="Neffati F."/>
            <person name="Najjar M.F."/>
            <person name="Bacha H."/>
            <person name="Abid-Essefi S."/>
        </authorList>
    </citation>
    <scope>BIOTECHNOLOGY</scope>
</reference>
<name>PATN_ASPCL</name>
<feature type="chain" id="PRO_0000437120" description="Isoepoxydon dehydrogenase patN">
    <location>
        <begin position="1"/>
        <end position="259"/>
    </location>
</feature>
<feature type="active site" description="Proton donor" evidence="3">
    <location>
        <position position="143"/>
    </location>
</feature>
<feature type="active site" description="Proton donor" evidence="3">
    <location>
        <position position="144"/>
    </location>
</feature>
<feature type="active site" description="Proton acceptor" evidence="4">
    <location>
        <position position="158"/>
    </location>
</feature>
<feature type="active site" description="Lowers pKa of active site Tyr" evidence="3">
    <location>
        <position position="162"/>
    </location>
</feature>
<feature type="binding site" evidence="3">
    <location>
        <position position="96"/>
    </location>
    <ligand>
        <name>NADP(+)</name>
        <dbReference type="ChEBI" id="CHEBI:58349"/>
    </ligand>
</feature>
<feature type="binding site" evidence="2">
    <location>
        <position position="125"/>
    </location>
    <ligand>
        <name>NADP(+)</name>
        <dbReference type="ChEBI" id="CHEBI:58349"/>
    </ligand>
</feature>
<feature type="binding site" evidence="3">
    <location>
        <position position="158"/>
    </location>
    <ligand>
        <name>NADP(+)</name>
        <dbReference type="ChEBI" id="CHEBI:58349"/>
    </ligand>
</feature>
<feature type="binding site" evidence="3">
    <location>
        <position position="162"/>
    </location>
    <ligand>
        <name>NADP(+)</name>
        <dbReference type="ChEBI" id="CHEBI:58349"/>
    </ligand>
</feature>
<feature type="binding site" evidence="3">
    <location>
        <position position="191"/>
    </location>
    <ligand>
        <name>NADP(+)</name>
        <dbReference type="ChEBI" id="CHEBI:58349"/>
    </ligand>
</feature>
<organism>
    <name type="scientific">Aspergillus clavatus (strain ATCC 1007 / CBS 513.65 / DSM 816 / NCTC 3887 / NRRL 1 / QM 1276 / 107)</name>
    <dbReference type="NCBI Taxonomy" id="344612"/>
    <lineage>
        <taxon>Eukaryota</taxon>
        <taxon>Fungi</taxon>
        <taxon>Dikarya</taxon>
        <taxon>Ascomycota</taxon>
        <taxon>Pezizomycotina</taxon>
        <taxon>Eurotiomycetes</taxon>
        <taxon>Eurotiomycetidae</taxon>
        <taxon>Eurotiales</taxon>
        <taxon>Aspergillaceae</taxon>
        <taxon>Aspergillus</taxon>
        <taxon>Aspergillus subgen. Fumigati</taxon>
    </lineage>
</organism>